<comment type="function">
    <text evidence="1">Catalyzes the NADPH-dependent rearrangement and reduction of 1-deoxy-D-xylulose-5-phosphate (DXP) to 2-C-methyl-D-erythritol 4-phosphate (MEP).</text>
</comment>
<comment type="catalytic activity">
    <reaction evidence="1">
        <text>2-C-methyl-D-erythritol 4-phosphate + NADP(+) = 1-deoxy-D-xylulose 5-phosphate + NADPH + H(+)</text>
        <dbReference type="Rhea" id="RHEA:13717"/>
        <dbReference type="ChEBI" id="CHEBI:15378"/>
        <dbReference type="ChEBI" id="CHEBI:57783"/>
        <dbReference type="ChEBI" id="CHEBI:57792"/>
        <dbReference type="ChEBI" id="CHEBI:58262"/>
        <dbReference type="ChEBI" id="CHEBI:58349"/>
        <dbReference type="EC" id="1.1.1.267"/>
    </reaction>
    <physiologicalReaction direction="right-to-left" evidence="1">
        <dbReference type="Rhea" id="RHEA:13719"/>
    </physiologicalReaction>
</comment>
<comment type="cofactor">
    <cofactor evidence="1">
        <name>Mg(2+)</name>
        <dbReference type="ChEBI" id="CHEBI:18420"/>
    </cofactor>
    <cofactor evidence="1">
        <name>Mn(2+)</name>
        <dbReference type="ChEBI" id="CHEBI:29035"/>
    </cofactor>
</comment>
<comment type="pathway">
    <text evidence="1">Isoprenoid biosynthesis; isopentenyl diphosphate biosynthesis via DXP pathway; isopentenyl diphosphate from 1-deoxy-D-xylulose 5-phosphate: step 1/6.</text>
</comment>
<comment type="similarity">
    <text evidence="1">Belongs to the DXR family.</text>
</comment>
<feature type="chain" id="PRO_0000163695" description="1-deoxy-D-xylulose 5-phosphate reductoisomerase">
    <location>
        <begin position="1"/>
        <end position="407"/>
    </location>
</feature>
<feature type="binding site" evidence="1">
    <location>
        <position position="10"/>
    </location>
    <ligand>
        <name>NADPH</name>
        <dbReference type="ChEBI" id="CHEBI:57783"/>
    </ligand>
</feature>
<feature type="binding site" evidence="1">
    <location>
        <position position="11"/>
    </location>
    <ligand>
        <name>NADPH</name>
        <dbReference type="ChEBI" id="CHEBI:57783"/>
    </ligand>
</feature>
<feature type="binding site" evidence="1">
    <location>
        <position position="12"/>
    </location>
    <ligand>
        <name>NADPH</name>
        <dbReference type="ChEBI" id="CHEBI:57783"/>
    </ligand>
</feature>
<feature type="binding site" evidence="1">
    <location>
        <position position="13"/>
    </location>
    <ligand>
        <name>NADPH</name>
        <dbReference type="ChEBI" id="CHEBI:57783"/>
    </ligand>
</feature>
<feature type="binding site" evidence="1">
    <location>
        <position position="36"/>
    </location>
    <ligand>
        <name>NADPH</name>
        <dbReference type="ChEBI" id="CHEBI:57783"/>
    </ligand>
</feature>
<feature type="binding site" evidence="1">
    <location>
        <position position="131"/>
    </location>
    <ligand>
        <name>NADPH</name>
        <dbReference type="ChEBI" id="CHEBI:57783"/>
    </ligand>
</feature>
<feature type="binding site" evidence="1">
    <location>
        <position position="132"/>
    </location>
    <ligand>
        <name>1-deoxy-D-xylulose 5-phosphate</name>
        <dbReference type="ChEBI" id="CHEBI:57792"/>
    </ligand>
</feature>
<feature type="binding site" evidence="1">
    <location>
        <position position="133"/>
    </location>
    <ligand>
        <name>NADPH</name>
        <dbReference type="ChEBI" id="CHEBI:57783"/>
    </ligand>
</feature>
<feature type="binding site" evidence="1">
    <location>
        <position position="155"/>
    </location>
    <ligand>
        <name>Mn(2+)</name>
        <dbReference type="ChEBI" id="CHEBI:29035"/>
    </ligand>
</feature>
<feature type="binding site" evidence="1">
    <location>
        <position position="156"/>
    </location>
    <ligand>
        <name>1-deoxy-D-xylulose 5-phosphate</name>
        <dbReference type="ChEBI" id="CHEBI:57792"/>
    </ligand>
</feature>
<feature type="binding site" evidence="1">
    <location>
        <position position="157"/>
    </location>
    <ligand>
        <name>1-deoxy-D-xylulose 5-phosphate</name>
        <dbReference type="ChEBI" id="CHEBI:57792"/>
    </ligand>
</feature>
<feature type="binding site" evidence="1">
    <location>
        <position position="157"/>
    </location>
    <ligand>
        <name>Mn(2+)</name>
        <dbReference type="ChEBI" id="CHEBI:29035"/>
    </ligand>
</feature>
<feature type="binding site" evidence="1">
    <location>
        <position position="181"/>
    </location>
    <ligand>
        <name>1-deoxy-D-xylulose 5-phosphate</name>
        <dbReference type="ChEBI" id="CHEBI:57792"/>
    </ligand>
</feature>
<feature type="binding site" evidence="1">
    <location>
        <position position="204"/>
    </location>
    <ligand>
        <name>1-deoxy-D-xylulose 5-phosphate</name>
        <dbReference type="ChEBI" id="CHEBI:57792"/>
    </ligand>
</feature>
<feature type="binding site" evidence="1">
    <location>
        <position position="210"/>
    </location>
    <ligand>
        <name>NADPH</name>
        <dbReference type="ChEBI" id="CHEBI:57783"/>
    </ligand>
</feature>
<feature type="binding site" evidence="1">
    <location>
        <position position="217"/>
    </location>
    <ligand>
        <name>1-deoxy-D-xylulose 5-phosphate</name>
        <dbReference type="ChEBI" id="CHEBI:57792"/>
    </ligand>
</feature>
<feature type="binding site" evidence="1">
    <location>
        <position position="222"/>
    </location>
    <ligand>
        <name>1-deoxy-D-xylulose 5-phosphate</name>
        <dbReference type="ChEBI" id="CHEBI:57792"/>
    </ligand>
</feature>
<feature type="binding site" evidence="1">
    <location>
        <position position="223"/>
    </location>
    <ligand>
        <name>1-deoxy-D-xylulose 5-phosphate</name>
        <dbReference type="ChEBI" id="CHEBI:57792"/>
    </ligand>
</feature>
<feature type="binding site" evidence="1">
    <location>
        <position position="226"/>
    </location>
    <ligand>
        <name>1-deoxy-D-xylulose 5-phosphate</name>
        <dbReference type="ChEBI" id="CHEBI:57792"/>
    </ligand>
</feature>
<feature type="binding site" evidence="1">
    <location>
        <position position="226"/>
    </location>
    <ligand>
        <name>Mn(2+)</name>
        <dbReference type="ChEBI" id="CHEBI:29035"/>
    </ligand>
</feature>
<name>DXR_CUTAK</name>
<gene>
    <name evidence="1" type="primary">dxr</name>
    <name type="ordered locus">PPA1510</name>
</gene>
<keyword id="KW-0414">Isoprene biosynthesis</keyword>
<keyword id="KW-0464">Manganese</keyword>
<keyword id="KW-0479">Metal-binding</keyword>
<keyword id="KW-0521">NADP</keyword>
<keyword id="KW-0560">Oxidoreductase</keyword>
<dbReference type="EC" id="1.1.1.267" evidence="1"/>
<dbReference type="EMBL" id="AE017283">
    <property type="protein sequence ID" value="AAT83257.1"/>
    <property type="molecule type" value="Genomic_DNA"/>
</dbReference>
<dbReference type="RefSeq" id="WP_002518367.1">
    <property type="nucleotide sequence ID" value="NZ_CP025935.1"/>
</dbReference>
<dbReference type="SMR" id="Q6A7K8"/>
<dbReference type="EnsemblBacteria" id="AAT83257">
    <property type="protein sequence ID" value="AAT83257"/>
    <property type="gene ID" value="PPA1510"/>
</dbReference>
<dbReference type="KEGG" id="pac:PPA1510"/>
<dbReference type="eggNOG" id="COG0743">
    <property type="taxonomic scope" value="Bacteria"/>
</dbReference>
<dbReference type="HOGENOM" id="CLU_035714_4_0_11"/>
<dbReference type="UniPathway" id="UPA00056">
    <property type="reaction ID" value="UER00092"/>
</dbReference>
<dbReference type="Proteomes" id="UP000000603">
    <property type="component" value="Chromosome"/>
</dbReference>
<dbReference type="GO" id="GO:0030604">
    <property type="term" value="F:1-deoxy-D-xylulose-5-phosphate reductoisomerase activity"/>
    <property type="evidence" value="ECO:0007669"/>
    <property type="project" value="UniProtKB-UniRule"/>
</dbReference>
<dbReference type="GO" id="GO:0030145">
    <property type="term" value="F:manganese ion binding"/>
    <property type="evidence" value="ECO:0007669"/>
    <property type="project" value="TreeGrafter"/>
</dbReference>
<dbReference type="GO" id="GO:0070402">
    <property type="term" value="F:NADPH binding"/>
    <property type="evidence" value="ECO:0007669"/>
    <property type="project" value="InterPro"/>
</dbReference>
<dbReference type="GO" id="GO:0051484">
    <property type="term" value="P:isopentenyl diphosphate biosynthetic process, methylerythritol 4-phosphate pathway involved in terpenoid biosynthetic process"/>
    <property type="evidence" value="ECO:0007669"/>
    <property type="project" value="TreeGrafter"/>
</dbReference>
<dbReference type="FunFam" id="3.40.50.720:FF:000045">
    <property type="entry name" value="1-deoxy-D-xylulose 5-phosphate reductoisomerase"/>
    <property type="match status" value="1"/>
</dbReference>
<dbReference type="Gene3D" id="1.10.1740.10">
    <property type="match status" value="1"/>
</dbReference>
<dbReference type="Gene3D" id="3.40.50.720">
    <property type="entry name" value="NAD(P)-binding Rossmann-like Domain"/>
    <property type="match status" value="1"/>
</dbReference>
<dbReference type="HAMAP" id="MF_00183">
    <property type="entry name" value="DXP_reductoisom"/>
    <property type="match status" value="1"/>
</dbReference>
<dbReference type="InterPro" id="IPR003821">
    <property type="entry name" value="DXP_reductoisomerase"/>
</dbReference>
<dbReference type="InterPro" id="IPR013644">
    <property type="entry name" value="DXP_reductoisomerase_C"/>
</dbReference>
<dbReference type="InterPro" id="IPR013512">
    <property type="entry name" value="DXP_reductoisomerase_N"/>
</dbReference>
<dbReference type="InterPro" id="IPR026877">
    <property type="entry name" value="DXPR_C"/>
</dbReference>
<dbReference type="InterPro" id="IPR036169">
    <property type="entry name" value="DXPR_C_sf"/>
</dbReference>
<dbReference type="InterPro" id="IPR036291">
    <property type="entry name" value="NAD(P)-bd_dom_sf"/>
</dbReference>
<dbReference type="NCBIfam" id="TIGR00243">
    <property type="entry name" value="Dxr"/>
    <property type="match status" value="1"/>
</dbReference>
<dbReference type="PANTHER" id="PTHR30525">
    <property type="entry name" value="1-DEOXY-D-XYLULOSE 5-PHOSPHATE REDUCTOISOMERASE"/>
    <property type="match status" value="1"/>
</dbReference>
<dbReference type="PANTHER" id="PTHR30525:SF0">
    <property type="entry name" value="1-DEOXY-D-XYLULOSE 5-PHOSPHATE REDUCTOISOMERASE, CHLOROPLASTIC"/>
    <property type="match status" value="1"/>
</dbReference>
<dbReference type="Pfam" id="PF08436">
    <property type="entry name" value="DXP_redisom_C"/>
    <property type="match status" value="1"/>
</dbReference>
<dbReference type="Pfam" id="PF02670">
    <property type="entry name" value="DXP_reductoisom"/>
    <property type="match status" value="1"/>
</dbReference>
<dbReference type="Pfam" id="PF13288">
    <property type="entry name" value="DXPR_C"/>
    <property type="match status" value="1"/>
</dbReference>
<dbReference type="PIRSF" id="PIRSF006205">
    <property type="entry name" value="Dxp_reductismrs"/>
    <property type="match status" value="1"/>
</dbReference>
<dbReference type="SUPFAM" id="SSF69055">
    <property type="entry name" value="1-deoxy-D-xylulose-5-phosphate reductoisomerase, C-terminal domain"/>
    <property type="match status" value="1"/>
</dbReference>
<dbReference type="SUPFAM" id="SSF55347">
    <property type="entry name" value="Glyceraldehyde-3-phosphate dehydrogenase-like, C-terminal domain"/>
    <property type="match status" value="1"/>
</dbReference>
<dbReference type="SUPFAM" id="SSF51735">
    <property type="entry name" value="NAD(P)-binding Rossmann-fold domains"/>
    <property type="match status" value="1"/>
</dbReference>
<protein>
    <recommendedName>
        <fullName evidence="1">1-deoxy-D-xylulose 5-phosphate reductoisomerase</fullName>
        <shortName evidence="1">DXP reductoisomerase</shortName>
        <ecNumber evidence="1">1.1.1.267</ecNumber>
    </recommendedName>
    <alternativeName>
        <fullName evidence="1">1-deoxyxylulose-5-phosphate reductoisomerase</fullName>
    </alternativeName>
    <alternativeName>
        <fullName evidence="1">2-C-methyl-D-erythritol 4-phosphate synthase</fullName>
    </alternativeName>
</protein>
<organism>
    <name type="scientific">Cutibacterium acnes (strain DSM 16379 / KPA171202)</name>
    <name type="common">Propionibacterium acnes</name>
    <dbReference type="NCBI Taxonomy" id="267747"/>
    <lineage>
        <taxon>Bacteria</taxon>
        <taxon>Bacillati</taxon>
        <taxon>Actinomycetota</taxon>
        <taxon>Actinomycetes</taxon>
        <taxon>Propionibacteriales</taxon>
        <taxon>Propionibacteriaceae</taxon>
        <taxon>Cutibacterium</taxon>
    </lineage>
</organism>
<evidence type="ECO:0000255" key="1">
    <source>
        <dbReference type="HAMAP-Rule" id="MF_00183"/>
    </source>
</evidence>
<reference key="1">
    <citation type="journal article" date="2004" name="Science">
        <title>The complete genome sequence of Propionibacterium acnes, a commensal of human skin.</title>
        <authorList>
            <person name="Brueggemann H."/>
            <person name="Henne A."/>
            <person name="Hoster F."/>
            <person name="Liesegang H."/>
            <person name="Wiezer A."/>
            <person name="Strittmatter A."/>
            <person name="Hujer S."/>
            <person name="Duerre P."/>
            <person name="Gottschalk G."/>
        </authorList>
    </citation>
    <scope>NUCLEOTIDE SEQUENCE [LARGE SCALE GENOMIC DNA]</scope>
    <source>
        <strain>DSM 16379 / KPA171202</strain>
    </source>
</reference>
<sequence length="407" mass="42399">MKKVIILGSTGSIGTQTLEVISSRRDQFEVAGISAGGSDVGSLAQQIIDFSIPVVAVAREDAAEELQRALAVQAGSRGRIVPNPRILTGPDASTELAAMPADVVCNAITGAAGLRPTLATLAAGTTLALANKESLVIGGRLVTQAAASGQIVPVDSEHSAFAQCLRGGGRNEVRRLVLTASGGPFRGRDRASLADVSAAEAMKHPTWNMGRVITINSSTLVNKGLELLEAALLYDVDLDDITVVVHPQSIVHSMVEFWDGATIAQASPPDMRLPIALGLSWPDRLPDAAAGCDWSTATQWTFEPLDNDTFGAVELARRAGHAAGTAPAVFNAANESCVDAFCAGSIGFLDITDTIAAVLDEHLSGDENDTLGARHVGDEALTLDAVLAADAWGRRRAAEVCARGIRR</sequence>
<accession>Q6A7K8</accession>
<proteinExistence type="inferred from homology"/>